<evidence type="ECO:0000255" key="1">
    <source>
        <dbReference type="HAMAP-Rule" id="MF_02115"/>
    </source>
</evidence>
<comment type="function">
    <text evidence="1">Catalyzes the transfer of the AMP portion of ATP to flavin mononucleotide (FMN) to produce flavin adenine dinucleotide (FAD) coenzyme.</text>
</comment>
<comment type="catalytic activity">
    <reaction evidence="1">
        <text>FMN + ATP + H(+) = FAD + diphosphate</text>
        <dbReference type="Rhea" id="RHEA:17237"/>
        <dbReference type="ChEBI" id="CHEBI:15378"/>
        <dbReference type="ChEBI" id="CHEBI:30616"/>
        <dbReference type="ChEBI" id="CHEBI:33019"/>
        <dbReference type="ChEBI" id="CHEBI:57692"/>
        <dbReference type="ChEBI" id="CHEBI:58210"/>
        <dbReference type="EC" id="2.7.7.2"/>
    </reaction>
</comment>
<comment type="cofactor">
    <cofactor evidence="1">
        <name>a divalent metal cation</name>
        <dbReference type="ChEBI" id="CHEBI:60240"/>
    </cofactor>
</comment>
<comment type="pathway">
    <text evidence="1">Cofactor biosynthesis; FAD biosynthesis; FAD from FMN: step 1/1.</text>
</comment>
<comment type="subunit">
    <text evidence="1">Homodimer.</text>
</comment>
<comment type="similarity">
    <text evidence="1">Belongs to the archaeal FAD synthase family.</text>
</comment>
<feature type="chain" id="PRO_0000406260" description="FAD synthase">
    <location>
        <begin position="1"/>
        <end position="140"/>
    </location>
</feature>
<feature type="binding site" evidence="1">
    <location>
        <begin position="9"/>
        <end position="10"/>
    </location>
    <ligand>
        <name>ATP</name>
        <dbReference type="ChEBI" id="CHEBI:30616"/>
    </ligand>
</feature>
<feature type="binding site" evidence="1">
    <location>
        <begin position="14"/>
        <end position="17"/>
    </location>
    <ligand>
        <name>ATP</name>
        <dbReference type="ChEBI" id="CHEBI:30616"/>
    </ligand>
</feature>
<feature type="binding site" evidence="1">
    <location>
        <position position="92"/>
    </location>
    <ligand>
        <name>ATP</name>
        <dbReference type="ChEBI" id="CHEBI:30616"/>
    </ligand>
</feature>
<feature type="binding site" evidence="1">
    <location>
        <position position="119"/>
    </location>
    <ligand>
        <name>ATP</name>
        <dbReference type="ChEBI" id="CHEBI:30616"/>
    </ligand>
</feature>
<dbReference type="EC" id="2.7.7.2" evidence="1"/>
<dbReference type="EMBL" id="CP000559">
    <property type="protein sequence ID" value="ABN06584.1"/>
    <property type="molecule type" value="Genomic_DNA"/>
</dbReference>
<dbReference type="RefSeq" id="WP_011832785.1">
    <property type="nucleotide sequence ID" value="NC_008942.1"/>
</dbReference>
<dbReference type="SMR" id="A2SQH8"/>
<dbReference type="STRING" id="410358.Mlab_0408"/>
<dbReference type="GeneID" id="4794564"/>
<dbReference type="KEGG" id="mla:Mlab_0408"/>
<dbReference type="eggNOG" id="arCOG01222">
    <property type="taxonomic scope" value="Archaea"/>
</dbReference>
<dbReference type="HOGENOM" id="CLU_034585_2_1_2"/>
<dbReference type="OrthoDB" id="1912at2157"/>
<dbReference type="UniPathway" id="UPA00277">
    <property type="reaction ID" value="UER00407"/>
</dbReference>
<dbReference type="Proteomes" id="UP000000365">
    <property type="component" value="Chromosome"/>
</dbReference>
<dbReference type="GO" id="GO:0005524">
    <property type="term" value="F:ATP binding"/>
    <property type="evidence" value="ECO:0007669"/>
    <property type="project" value="UniProtKB-UniRule"/>
</dbReference>
<dbReference type="GO" id="GO:0003919">
    <property type="term" value="F:FMN adenylyltransferase activity"/>
    <property type="evidence" value="ECO:0007669"/>
    <property type="project" value="UniProtKB-UniRule"/>
</dbReference>
<dbReference type="GO" id="GO:0006747">
    <property type="term" value="P:FAD biosynthetic process"/>
    <property type="evidence" value="ECO:0007669"/>
    <property type="project" value="UniProtKB-UniRule"/>
</dbReference>
<dbReference type="GO" id="GO:0046444">
    <property type="term" value="P:FMN metabolic process"/>
    <property type="evidence" value="ECO:0007669"/>
    <property type="project" value="UniProtKB-UniRule"/>
</dbReference>
<dbReference type="Gene3D" id="3.40.50.620">
    <property type="entry name" value="HUPs"/>
    <property type="match status" value="1"/>
</dbReference>
<dbReference type="HAMAP" id="MF_02115">
    <property type="entry name" value="FAD_synth_arch"/>
    <property type="match status" value="1"/>
</dbReference>
<dbReference type="InterPro" id="IPR050385">
    <property type="entry name" value="Archaeal_FAD_synthase"/>
</dbReference>
<dbReference type="InterPro" id="IPR004821">
    <property type="entry name" value="Cyt_trans-like"/>
</dbReference>
<dbReference type="InterPro" id="IPR024902">
    <property type="entry name" value="FAD_synth_RibL"/>
</dbReference>
<dbReference type="InterPro" id="IPR014729">
    <property type="entry name" value="Rossmann-like_a/b/a_fold"/>
</dbReference>
<dbReference type="NCBIfam" id="TIGR00125">
    <property type="entry name" value="cyt_tran_rel"/>
    <property type="match status" value="1"/>
</dbReference>
<dbReference type="PANTHER" id="PTHR43793">
    <property type="entry name" value="FAD SYNTHASE"/>
    <property type="match status" value="1"/>
</dbReference>
<dbReference type="PANTHER" id="PTHR43793:SF1">
    <property type="entry name" value="FAD SYNTHASE"/>
    <property type="match status" value="1"/>
</dbReference>
<dbReference type="Pfam" id="PF01467">
    <property type="entry name" value="CTP_transf_like"/>
    <property type="match status" value="1"/>
</dbReference>
<dbReference type="SUPFAM" id="SSF52374">
    <property type="entry name" value="Nucleotidylyl transferase"/>
    <property type="match status" value="1"/>
</dbReference>
<gene>
    <name evidence="1" type="primary">ribL</name>
    <name type="ordered locus">Mlab_0408</name>
</gene>
<reference key="1">
    <citation type="journal article" date="2009" name="Stand. Genomic Sci.">
        <title>Complete genome sequence of Methanocorpusculum labreanum type strain Z.</title>
        <authorList>
            <person name="Anderson I.J."/>
            <person name="Sieprawska-Lupa M."/>
            <person name="Goltsman E."/>
            <person name="Lapidus A."/>
            <person name="Copeland A."/>
            <person name="Glavina Del Rio T."/>
            <person name="Tice H."/>
            <person name="Dalin E."/>
            <person name="Barry K."/>
            <person name="Pitluck S."/>
            <person name="Hauser L."/>
            <person name="Land M."/>
            <person name="Lucas S."/>
            <person name="Richardson P."/>
            <person name="Whitman W.B."/>
            <person name="Kyrpides N.C."/>
        </authorList>
    </citation>
    <scope>NUCLEOTIDE SEQUENCE [LARGE SCALE GENOMIC DNA]</scope>
    <source>
        <strain>ATCC 43576 / DSM 4855 / Z</strain>
    </source>
</reference>
<keyword id="KW-0067">ATP-binding</keyword>
<keyword id="KW-0274">FAD</keyword>
<keyword id="KW-0285">Flavoprotein</keyword>
<keyword id="KW-0288">FMN</keyword>
<keyword id="KW-0547">Nucleotide-binding</keyword>
<keyword id="KW-0548">Nucleotidyltransferase</keyword>
<keyword id="KW-1185">Reference proteome</keyword>
<keyword id="KW-0808">Transferase</keyword>
<organism>
    <name type="scientific">Methanocorpusculum labreanum (strain ATCC 43576 / DSM 4855 / Z)</name>
    <dbReference type="NCBI Taxonomy" id="410358"/>
    <lineage>
        <taxon>Archaea</taxon>
        <taxon>Methanobacteriati</taxon>
        <taxon>Methanobacteriota</taxon>
        <taxon>Stenosarchaea group</taxon>
        <taxon>Methanomicrobia</taxon>
        <taxon>Methanomicrobiales</taxon>
        <taxon>Methanocorpusculaceae</taxon>
        <taxon>Methanocorpusculum</taxon>
    </lineage>
</organism>
<accession>A2SQH8</accession>
<proteinExistence type="inferred from homology"/>
<protein>
    <recommendedName>
        <fullName evidence="1">FAD synthase</fullName>
        <ecNumber evidence="1">2.7.7.2</ecNumber>
    </recommendedName>
    <alternativeName>
        <fullName evidence="1">FMN adenylyltransferase</fullName>
    </alternativeName>
    <alternativeName>
        <fullName evidence="1">Flavin adenine dinucleotide synthase</fullName>
    </alternativeName>
</protein>
<sequence length="140" mass="16123">MKKIVATGTFDILHPGHIYYLEESKKLGDELWVIVAREKNVVHKPRPIVSEDQRLKMIQSLKCVDHAVLGDQTDMYKPIREIDPAVITIGFNQKWSEEKLRADLAERNICADVVRISEYTGMPFTSSTKIIDEAVRRRTK</sequence>
<name>RIBL_METLZ</name>